<evidence type="ECO:0000255" key="1">
    <source>
        <dbReference type="HAMAP-Rule" id="MF_00331"/>
    </source>
</evidence>
<name>ISCS_ECO81</name>
<accession>B7MYG3</accession>
<organism>
    <name type="scientific">Escherichia coli O81 (strain ED1a)</name>
    <dbReference type="NCBI Taxonomy" id="585397"/>
    <lineage>
        <taxon>Bacteria</taxon>
        <taxon>Pseudomonadati</taxon>
        <taxon>Pseudomonadota</taxon>
        <taxon>Gammaproteobacteria</taxon>
        <taxon>Enterobacterales</taxon>
        <taxon>Enterobacteriaceae</taxon>
        <taxon>Escherichia</taxon>
    </lineage>
</organism>
<comment type="function">
    <text evidence="1">Master enzyme that delivers sulfur to a number of partners involved in Fe-S cluster assembly, tRNA modification or cofactor biosynthesis. Catalyzes the removal of elemental sulfur and selenium atoms from cysteine and selenocysteine to produce alanine. Functions as a sulfur delivery protein for Fe-S cluster synthesis onto IscU, an Fe-S scaffold assembly protein, as well as other S acceptor proteins. Also functions as a selenium delivery protein in the pathway for the biosynthesis of selenophosphate.</text>
</comment>
<comment type="catalytic activity">
    <reaction evidence="1">
        <text>(sulfur carrier)-H + L-cysteine = (sulfur carrier)-SH + L-alanine</text>
        <dbReference type="Rhea" id="RHEA:43892"/>
        <dbReference type="Rhea" id="RHEA-COMP:14737"/>
        <dbReference type="Rhea" id="RHEA-COMP:14739"/>
        <dbReference type="ChEBI" id="CHEBI:29917"/>
        <dbReference type="ChEBI" id="CHEBI:35235"/>
        <dbReference type="ChEBI" id="CHEBI:57972"/>
        <dbReference type="ChEBI" id="CHEBI:64428"/>
        <dbReference type="EC" id="2.8.1.7"/>
    </reaction>
</comment>
<comment type="cofactor">
    <cofactor evidence="1">
        <name>pyridoxal 5'-phosphate</name>
        <dbReference type="ChEBI" id="CHEBI:597326"/>
    </cofactor>
</comment>
<comment type="pathway">
    <text evidence="1">Cofactor biosynthesis; iron-sulfur cluster biosynthesis.</text>
</comment>
<comment type="subunit">
    <text evidence="1">Homodimer. Forms a heterotetramer with IscU, interacts with other sulfur acceptors.</text>
</comment>
<comment type="subcellular location">
    <subcellularLocation>
        <location evidence="1">Cytoplasm</location>
    </subcellularLocation>
</comment>
<comment type="similarity">
    <text evidence="1">Belongs to the class-V pyridoxal-phosphate-dependent aminotransferase family. NifS/IscS subfamily.</text>
</comment>
<protein>
    <recommendedName>
        <fullName evidence="1">Cysteine desulfurase IscS</fullName>
        <ecNumber evidence="1">2.8.1.7</ecNumber>
    </recommendedName>
</protein>
<gene>
    <name evidence="1" type="primary">iscS</name>
    <name type="ordered locus">ECED1_2961</name>
</gene>
<sequence length="404" mass="45090">MKLPIYLDYSATTPVDPRVAEKMMQFMTMDGTFGNPASRSHRFGWQAEEAVDIARNQIADLVGADPREIVFTSGATESDNLAIKGAANFYQKKGKHIITSKTEHKAVLDTCRQLEREGFEVTYLAPQRNGIIDLKELEAAMRDDTILVSIMHVNNEIGVVQDIAAIGEMCRARGIIYHVDATQSVGKLPIDLSQLKVDLMSFSGHKIYGPKGIGALYVRRKPRVRIEAQMHGGGHERGMRSGTLPVHQIVGMGEAYRIAKEEMATEMERLRGLRNRLWNGIKDIEEVYLNGDLEHGAPNILNVSFNYVEGESLIMALKDLAVSSGSACTSASLEPSYVLRALGLNDELAHSSIRFSLGRFTTEEEIDYTIELVRKSIGRLRDLSPLWEMYKQGVDLNSIEWAHH</sequence>
<reference key="1">
    <citation type="journal article" date="2009" name="PLoS Genet.">
        <title>Organised genome dynamics in the Escherichia coli species results in highly diverse adaptive paths.</title>
        <authorList>
            <person name="Touchon M."/>
            <person name="Hoede C."/>
            <person name="Tenaillon O."/>
            <person name="Barbe V."/>
            <person name="Baeriswyl S."/>
            <person name="Bidet P."/>
            <person name="Bingen E."/>
            <person name="Bonacorsi S."/>
            <person name="Bouchier C."/>
            <person name="Bouvet O."/>
            <person name="Calteau A."/>
            <person name="Chiapello H."/>
            <person name="Clermont O."/>
            <person name="Cruveiller S."/>
            <person name="Danchin A."/>
            <person name="Diard M."/>
            <person name="Dossat C."/>
            <person name="Karoui M.E."/>
            <person name="Frapy E."/>
            <person name="Garry L."/>
            <person name="Ghigo J.M."/>
            <person name="Gilles A.M."/>
            <person name="Johnson J."/>
            <person name="Le Bouguenec C."/>
            <person name="Lescat M."/>
            <person name="Mangenot S."/>
            <person name="Martinez-Jehanne V."/>
            <person name="Matic I."/>
            <person name="Nassif X."/>
            <person name="Oztas S."/>
            <person name="Petit M.A."/>
            <person name="Pichon C."/>
            <person name="Rouy Z."/>
            <person name="Ruf C.S."/>
            <person name="Schneider D."/>
            <person name="Tourret J."/>
            <person name="Vacherie B."/>
            <person name="Vallenet D."/>
            <person name="Medigue C."/>
            <person name="Rocha E.P.C."/>
            <person name="Denamur E."/>
        </authorList>
    </citation>
    <scope>NUCLEOTIDE SEQUENCE [LARGE SCALE GENOMIC DNA]</scope>
    <source>
        <strain>ED1a</strain>
    </source>
</reference>
<keyword id="KW-0001">2Fe-2S</keyword>
<keyword id="KW-0963">Cytoplasm</keyword>
<keyword id="KW-0408">Iron</keyword>
<keyword id="KW-0411">Iron-sulfur</keyword>
<keyword id="KW-0479">Metal-binding</keyword>
<keyword id="KW-0663">Pyridoxal phosphate</keyword>
<keyword id="KW-0808">Transferase</keyword>
<dbReference type="EC" id="2.8.1.7" evidence="1"/>
<dbReference type="EMBL" id="CU928162">
    <property type="protein sequence ID" value="CAR09129.2"/>
    <property type="molecule type" value="Genomic_DNA"/>
</dbReference>
<dbReference type="RefSeq" id="WP_001295373.1">
    <property type="nucleotide sequence ID" value="NC_011745.1"/>
</dbReference>
<dbReference type="SMR" id="B7MYG3"/>
<dbReference type="GeneID" id="93774606"/>
<dbReference type="KEGG" id="ecq:ECED1_2961"/>
<dbReference type="HOGENOM" id="CLU_003433_0_2_6"/>
<dbReference type="UniPathway" id="UPA00266"/>
<dbReference type="Proteomes" id="UP000000748">
    <property type="component" value="Chromosome"/>
</dbReference>
<dbReference type="GO" id="GO:1990221">
    <property type="term" value="C:L-cysteine desulfurase complex"/>
    <property type="evidence" value="ECO:0007669"/>
    <property type="project" value="UniProtKB-ARBA"/>
</dbReference>
<dbReference type="GO" id="GO:0051537">
    <property type="term" value="F:2 iron, 2 sulfur cluster binding"/>
    <property type="evidence" value="ECO:0007669"/>
    <property type="project" value="UniProtKB-UniRule"/>
</dbReference>
<dbReference type="GO" id="GO:0031071">
    <property type="term" value="F:cysteine desulfurase activity"/>
    <property type="evidence" value="ECO:0007669"/>
    <property type="project" value="UniProtKB-UniRule"/>
</dbReference>
<dbReference type="GO" id="GO:0046872">
    <property type="term" value="F:metal ion binding"/>
    <property type="evidence" value="ECO:0007669"/>
    <property type="project" value="UniProtKB-KW"/>
</dbReference>
<dbReference type="GO" id="GO:0030170">
    <property type="term" value="F:pyridoxal phosphate binding"/>
    <property type="evidence" value="ECO:0007669"/>
    <property type="project" value="UniProtKB-UniRule"/>
</dbReference>
<dbReference type="GO" id="GO:0044571">
    <property type="term" value="P:[2Fe-2S] cluster assembly"/>
    <property type="evidence" value="ECO:0007669"/>
    <property type="project" value="UniProtKB-UniRule"/>
</dbReference>
<dbReference type="FunFam" id="3.40.640.10:FF:000003">
    <property type="entry name" value="Cysteine desulfurase IscS"/>
    <property type="match status" value="1"/>
</dbReference>
<dbReference type="FunFam" id="3.90.1150.10:FF:000002">
    <property type="entry name" value="Cysteine desulfurase IscS"/>
    <property type="match status" value="1"/>
</dbReference>
<dbReference type="Gene3D" id="3.90.1150.10">
    <property type="entry name" value="Aspartate Aminotransferase, domain 1"/>
    <property type="match status" value="1"/>
</dbReference>
<dbReference type="Gene3D" id="3.40.640.10">
    <property type="entry name" value="Type I PLP-dependent aspartate aminotransferase-like (Major domain)"/>
    <property type="match status" value="1"/>
</dbReference>
<dbReference type="HAMAP" id="MF_00331">
    <property type="entry name" value="Cys_desulf_IscS"/>
    <property type="match status" value="1"/>
</dbReference>
<dbReference type="InterPro" id="IPR000192">
    <property type="entry name" value="Aminotrans_V_dom"/>
</dbReference>
<dbReference type="InterPro" id="IPR020578">
    <property type="entry name" value="Aminotrans_V_PyrdxlP_BS"/>
</dbReference>
<dbReference type="InterPro" id="IPR010240">
    <property type="entry name" value="Cys_deSase_IscS"/>
</dbReference>
<dbReference type="InterPro" id="IPR016454">
    <property type="entry name" value="Cysteine_dSase"/>
</dbReference>
<dbReference type="InterPro" id="IPR015424">
    <property type="entry name" value="PyrdxlP-dep_Trfase"/>
</dbReference>
<dbReference type="InterPro" id="IPR015421">
    <property type="entry name" value="PyrdxlP-dep_Trfase_major"/>
</dbReference>
<dbReference type="InterPro" id="IPR015422">
    <property type="entry name" value="PyrdxlP-dep_Trfase_small"/>
</dbReference>
<dbReference type="NCBIfam" id="TIGR02006">
    <property type="entry name" value="IscS"/>
    <property type="match status" value="1"/>
</dbReference>
<dbReference type="NCBIfam" id="NF002806">
    <property type="entry name" value="PRK02948.1"/>
    <property type="match status" value="1"/>
</dbReference>
<dbReference type="NCBIfam" id="NF010611">
    <property type="entry name" value="PRK14012.1"/>
    <property type="match status" value="1"/>
</dbReference>
<dbReference type="PANTHER" id="PTHR11601:SF34">
    <property type="entry name" value="CYSTEINE DESULFURASE"/>
    <property type="match status" value="1"/>
</dbReference>
<dbReference type="PANTHER" id="PTHR11601">
    <property type="entry name" value="CYSTEINE DESULFURYLASE FAMILY MEMBER"/>
    <property type="match status" value="1"/>
</dbReference>
<dbReference type="Pfam" id="PF00266">
    <property type="entry name" value="Aminotran_5"/>
    <property type="match status" value="1"/>
</dbReference>
<dbReference type="PIRSF" id="PIRSF005572">
    <property type="entry name" value="NifS"/>
    <property type="match status" value="1"/>
</dbReference>
<dbReference type="SUPFAM" id="SSF53383">
    <property type="entry name" value="PLP-dependent transferases"/>
    <property type="match status" value="1"/>
</dbReference>
<dbReference type="PROSITE" id="PS00595">
    <property type="entry name" value="AA_TRANSFER_CLASS_5"/>
    <property type="match status" value="1"/>
</dbReference>
<proteinExistence type="inferred from homology"/>
<feature type="chain" id="PRO_1000133117" description="Cysteine desulfurase IscS">
    <location>
        <begin position="1"/>
        <end position="404"/>
    </location>
</feature>
<feature type="active site" description="Cysteine persulfide intermediate" evidence="1">
    <location>
        <position position="328"/>
    </location>
</feature>
<feature type="binding site" evidence="1">
    <location>
        <begin position="75"/>
        <end position="76"/>
    </location>
    <ligand>
        <name>pyridoxal 5'-phosphate</name>
        <dbReference type="ChEBI" id="CHEBI:597326"/>
    </ligand>
</feature>
<feature type="binding site" evidence="1">
    <location>
        <position position="155"/>
    </location>
    <ligand>
        <name>pyridoxal 5'-phosphate</name>
        <dbReference type="ChEBI" id="CHEBI:597326"/>
    </ligand>
</feature>
<feature type="binding site" evidence="1">
    <location>
        <position position="183"/>
    </location>
    <ligand>
        <name>pyridoxal 5'-phosphate</name>
        <dbReference type="ChEBI" id="CHEBI:597326"/>
    </ligand>
</feature>
<feature type="binding site" evidence="1">
    <location>
        <begin position="203"/>
        <end position="205"/>
    </location>
    <ligand>
        <name>pyridoxal 5'-phosphate</name>
        <dbReference type="ChEBI" id="CHEBI:597326"/>
    </ligand>
</feature>
<feature type="binding site" evidence="1">
    <location>
        <position position="243"/>
    </location>
    <ligand>
        <name>pyridoxal 5'-phosphate</name>
        <dbReference type="ChEBI" id="CHEBI:597326"/>
    </ligand>
</feature>
<feature type="binding site" description="via persulfide group" evidence="1">
    <location>
        <position position="328"/>
    </location>
    <ligand>
        <name>[2Fe-2S] cluster</name>
        <dbReference type="ChEBI" id="CHEBI:190135"/>
        <note>ligand shared with IscU</note>
    </ligand>
</feature>
<feature type="modified residue" description="N6-(pyridoxal phosphate)lysine" evidence="1">
    <location>
        <position position="206"/>
    </location>
</feature>